<gene>
    <name evidence="1" type="primary">rpsK</name>
    <name type="ordered locus">Mmar10_1772</name>
</gene>
<organism>
    <name type="scientific">Maricaulis maris (strain MCS10)</name>
    <name type="common">Caulobacter maris</name>
    <dbReference type="NCBI Taxonomy" id="394221"/>
    <lineage>
        <taxon>Bacteria</taxon>
        <taxon>Pseudomonadati</taxon>
        <taxon>Pseudomonadota</taxon>
        <taxon>Alphaproteobacteria</taxon>
        <taxon>Maricaulales</taxon>
        <taxon>Maricaulaceae</taxon>
        <taxon>Maricaulis</taxon>
    </lineage>
</organism>
<keyword id="KW-1185">Reference proteome</keyword>
<keyword id="KW-0687">Ribonucleoprotein</keyword>
<keyword id="KW-0689">Ribosomal protein</keyword>
<keyword id="KW-0694">RNA-binding</keyword>
<keyword id="KW-0699">rRNA-binding</keyword>
<dbReference type="EMBL" id="CP000449">
    <property type="protein sequence ID" value="ABI66064.1"/>
    <property type="molecule type" value="Genomic_DNA"/>
</dbReference>
<dbReference type="RefSeq" id="WP_011643710.1">
    <property type="nucleotide sequence ID" value="NC_008347.1"/>
</dbReference>
<dbReference type="SMR" id="Q0ANS3"/>
<dbReference type="STRING" id="394221.Mmar10_1772"/>
<dbReference type="KEGG" id="mmr:Mmar10_1772"/>
<dbReference type="eggNOG" id="COG0100">
    <property type="taxonomic scope" value="Bacteria"/>
</dbReference>
<dbReference type="HOGENOM" id="CLU_072439_5_0_5"/>
<dbReference type="OrthoDB" id="9806415at2"/>
<dbReference type="Proteomes" id="UP000001964">
    <property type="component" value="Chromosome"/>
</dbReference>
<dbReference type="GO" id="GO:1990904">
    <property type="term" value="C:ribonucleoprotein complex"/>
    <property type="evidence" value="ECO:0007669"/>
    <property type="project" value="UniProtKB-KW"/>
</dbReference>
<dbReference type="GO" id="GO:0005840">
    <property type="term" value="C:ribosome"/>
    <property type="evidence" value="ECO:0007669"/>
    <property type="project" value="UniProtKB-KW"/>
</dbReference>
<dbReference type="GO" id="GO:0019843">
    <property type="term" value="F:rRNA binding"/>
    <property type="evidence" value="ECO:0007669"/>
    <property type="project" value="UniProtKB-UniRule"/>
</dbReference>
<dbReference type="GO" id="GO:0003735">
    <property type="term" value="F:structural constituent of ribosome"/>
    <property type="evidence" value="ECO:0007669"/>
    <property type="project" value="InterPro"/>
</dbReference>
<dbReference type="GO" id="GO:0006412">
    <property type="term" value="P:translation"/>
    <property type="evidence" value="ECO:0007669"/>
    <property type="project" value="UniProtKB-UniRule"/>
</dbReference>
<dbReference type="FunFam" id="3.30.420.80:FF:000001">
    <property type="entry name" value="30S ribosomal protein S11"/>
    <property type="match status" value="1"/>
</dbReference>
<dbReference type="Gene3D" id="3.30.420.80">
    <property type="entry name" value="Ribosomal protein S11"/>
    <property type="match status" value="1"/>
</dbReference>
<dbReference type="HAMAP" id="MF_01310">
    <property type="entry name" value="Ribosomal_uS11"/>
    <property type="match status" value="1"/>
</dbReference>
<dbReference type="InterPro" id="IPR001971">
    <property type="entry name" value="Ribosomal_uS11"/>
</dbReference>
<dbReference type="InterPro" id="IPR019981">
    <property type="entry name" value="Ribosomal_uS11_bac-type"/>
</dbReference>
<dbReference type="InterPro" id="IPR018102">
    <property type="entry name" value="Ribosomal_uS11_CS"/>
</dbReference>
<dbReference type="InterPro" id="IPR036967">
    <property type="entry name" value="Ribosomal_uS11_sf"/>
</dbReference>
<dbReference type="NCBIfam" id="NF003698">
    <property type="entry name" value="PRK05309.1"/>
    <property type="match status" value="1"/>
</dbReference>
<dbReference type="NCBIfam" id="TIGR03632">
    <property type="entry name" value="uS11_bact"/>
    <property type="match status" value="1"/>
</dbReference>
<dbReference type="PANTHER" id="PTHR11759">
    <property type="entry name" value="40S RIBOSOMAL PROTEIN S14/30S RIBOSOMAL PROTEIN S11"/>
    <property type="match status" value="1"/>
</dbReference>
<dbReference type="Pfam" id="PF00411">
    <property type="entry name" value="Ribosomal_S11"/>
    <property type="match status" value="1"/>
</dbReference>
<dbReference type="PIRSF" id="PIRSF002131">
    <property type="entry name" value="Ribosomal_S11"/>
    <property type="match status" value="1"/>
</dbReference>
<dbReference type="SUPFAM" id="SSF53137">
    <property type="entry name" value="Translational machinery components"/>
    <property type="match status" value="1"/>
</dbReference>
<dbReference type="PROSITE" id="PS00054">
    <property type="entry name" value="RIBOSOMAL_S11"/>
    <property type="match status" value="1"/>
</dbReference>
<accession>Q0ANS3</accession>
<sequence>MAKDTGRVKRRERKNITSGVAHVSASFNNTMVTITDAQGNAISWSSAGHMGFKGSRKSTPYAAQMAAEDAGKKAMEHGMKTIEVKVSGPGSGRESALRALQSVGFTITTIQDVTPIPHNGCRPPKRRRV</sequence>
<name>RS11_MARMM</name>
<reference key="1">
    <citation type="submission" date="2006-08" db="EMBL/GenBank/DDBJ databases">
        <title>Complete sequence of Maricaulis maris MCS10.</title>
        <authorList>
            <consortium name="US DOE Joint Genome Institute"/>
            <person name="Copeland A."/>
            <person name="Lucas S."/>
            <person name="Lapidus A."/>
            <person name="Barry K."/>
            <person name="Detter J.C."/>
            <person name="Glavina del Rio T."/>
            <person name="Hammon N."/>
            <person name="Israni S."/>
            <person name="Dalin E."/>
            <person name="Tice H."/>
            <person name="Pitluck S."/>
            <person name="Saunders E."/>
            <person name="Brettin T."/>
            <person name="Bruce D."/>
            <person name="Han C."/>
            <person name="Tapia R."/>
            <person name="Gilna P."/>
            <person name="Schmutz J."/>
            <person name="Larimer F."/>
            <person name="Land M."/>
            <person name="Hauser L."/>
            <person name="Kyrpides N."/>
            <person name="Mikhailova N."/>
            <person name="Viollier P."/>
            <person name="Stephens C."/>
            <person name="Richardson P."/>
        </authorList>
    </citation>
    <scope>NUCLEOTIDE SEQUENCE [LARGE SCALE GENOMIC DNA]</scope>
    <source>
        <strain>MCS10</strain>
    </source>
</reference>
<protein>
    <recommendedName>
        <fullName evidence="1">Small ribosomal subunit protein uS11</fullName>
    </recommendedName>
    <alternativeName>
        <fullName evidence="2">30S ribosomal protein S11</fullName>
    </alternativeName>
</protein>
<feature type="chain" id="PRO_0000294788" description="Small ribosomal subunit protein uS11">
    <location>
        <begin position="1"/>
        <end position="129"/>
    </location>
</feature>
<comment type="function">
    <text evidence="1">Located on the platform of the 30S subunit, it bridges several disparate RNA helices of the 16S rRNA. Forms part of the Shine-Dalgarno cleft in the 70S ribosome.</text>
</comment>
<comment type="subunit">
    <text evidence="1">Part of the 30S ribosomal subunit. Interacts with proteins S7 and S18. Binds to IF-3.</text>
</comment>
<comment type="similarity">
    <text evidence="1">Belongs to the universal ribosomal protein uS11 family.</text>
</comment>
<evidence type="ECO:0000255" key="1">
    <source>
        <dbReference type="HAMAP-Rule" id="MF_01310"/>
    </source>
</evidence>
<evidence type="ECO:0000305" key="2"/>
<proteinExistence type="inferred from homology"/>